<feature type="signal peptide" evidence="1">
    <location>
        <begin position="1"/>
        <end position="21"/>
    </location>
</feature>
<feature type="chain" id="PRO_5000130681" description="Tol-Pal system protein TolB" evidence="1">
    <location>
        <begin position="22"/>
        <end position="442"/>
    </location>
</feature>
<dbReference type="EMBL" id="CP000447">
    <property type="protein sequence ID" value="ABI71314.1"/>
    <property type="molecule type" value="Genomic_DNA"/>
</dbReference>
<dbReference type="RefSeq" id="WP_011636935.1">
    <property type="nucleotide sequence ID" value="NC_008345.1"/>
</dbReference>
<dbReference type="SMR" id="Q084K1"/>
<dbReference type="STRING" id="318167.Sfri_1462"/>
<dbReference type="KEGG" id="sfr:Sfri_1462"/>
<dbReference type="eggNOG" id="COG0823">
    <property type="taxonomic scope" value="Bacteria"/>
</dbReference>
<dbReference type="HOGENOM" id="CLU_047123_0_0_6"/>
<dbReference type="OrthoDB" id="9802240at2"/>
<dbReference type="Proteomes" id="UP000000684">
    <property type="component" value="Chromosome"/>
</dbReference>
<dbReference type="GO" id="GO:0042597">
    <property type="term" value="C:periplasmic space"/>
    <property type="evidence" value="ECO:0007669"/>
    <property type="project" value="UniProtKB-SubCell"/>
</dbReference>
<dbReference type="GO" id="GO:0051301">
    <property type="term" value="P:cell division"/>
    <property type="evidence" value="ECO:0007669"/>
    <property type="project" value="UniProtKB-UniRule"/>
</dbReference>
<dbReference type="GO" id="GO:0017038">
    <property type="term" value="P:protein import"/>
    <property type="evidence" value="ECO:0007669"/>
    <property type="project" value="InterPro"/>
</dbReference>
<dbReference type="Gene3D" id="2.120.10.30">
    <property type="entry name" value="TolB, C-terminal domain"/>
    <property type="match status" value="1"/>
</dbReference>
<dbReference type="Gene3D" id="3.40.50.10070">
    <property type="entry name" value="TolB, N-terminal domain"/>
    <property type="match status" value="1"/>
</dbReference>
<dbReference type="HAMAP" id="MF_00671">
    <property type="entry name" value="TolB"/>
    <property type="match status" value="1"/>
</dbReference>
<dbReference type="InterPro" id="IPR011042">
    <property type="entry name" value="6-blade_b-propeller_TolB-like"/>
</dbReference>
<dbReference type="InterPro" id="IPR011659">
    <property type="entry name" value="PD40"/>
</dbReference>
<dbReference type="InterPro" id="IPR014167">
    <property type="entry name" value="Tol-Pal_TolB"/>
</dbReference>
<dbReference type="InterPro" id="IPR007195">
    <property type="entry name" value="TolB_N"/>
</dbReference>
<dbReference type="NCBIfam" id="TIGR02800">
    <property type="entry name" value="propeller_TolB"/>
    <property type="match status" value="1"/>
</dbReference>
<dbReference type="PANTHER" id="PTHR36842:SF1">
    <property type="entry name" value="PROTEIN TOLB"/>
    <property type="match status" value="1"/>
</dbReference>
<dbReference type="PANTHER" id="PTHR36842">
    <property type="entry name" value="PROTEIN TOLB HOMOLOG"/>
    <property type="match status" value="1"/>
</dbReference>
<dbReference type="Pfam" id="PF07676">
    <property type="entry name" value="PD40"/>
    <property type="match status" value="4"/>
</dbReference>
<dbReference type="Pfam" id="PF04052">
    <property type="entry name" value="TolB_N"/>
    <property type="match status" value="1"/>
</dbReference>
<dbReference type="SUPFAM" id="SSF52964">
    <property type="entry name" value="TolB, N-terminal domain"/>
    <property type="match status" value="1"/>
</dbReference>
<dbReference type="SUPFAM" id="SSF69304">
    <property type="entry name" value="Tricorn protease N-terminal domain"/>
    <property type="match status" value="1"/>
</dbReference>
<accession>Q084K1</accession>
<proteinExistence type="inferred from homology"/>
<gene>
    <name evidence="1" type="primary">tolB</name>
    <name type="ordered locus">Sfri_1462</name>
</gene>
<reference key="1">
    <citation type="submission" date="2006-08" db="EMBL/GenBank/DDBJ databases">
        <title>Complete sequence of Shewanella frigidimarina NCIMB 400.</title>
        <authorList>
            <consortium name="US DOE Joint Genome Institute"/>
            <person name="Copeland A."/>
            <person name="Lucas S."/>
            <person name="Lapidus A."/>
            <person name="Barry K."/>
            <person name="Detter J.C."/>
            <person name="Glavina del Rio T."/>
            <person name="Hammon N."/>
            <person name="Israni S."/>
            <person name="Dalin E."/>
            <person name="Tice H."/>
            <person name="Pitluck S."/>
            <person name="Fredrickson J.K."/>
            <person name="Kolker E."/>
            <person name="McCuel L.A."/>
            <person name="DiChristina T."/>
            <person name="Nealson K.H."/>
            <person name="Newman D."/>
            <person name="Tiedje J.M."/>
            <person name="Zhou J."/>
            <person name="Romine M.F."/>
            <person name="Culley D.E."/>
            <person name="Serres M."/>
            <person name="Chertkov O."/>
            <person name="Brettin T."/>
            <person name="Bruce D."/>
            <person name="Han C."/>
            <person name="Tapia R."/>
            <person name="Gilna P."/>
            <person name="Schmutz J."/>
            <person name="Larimer F."/>
            <person name="Land M."/>
            <person name="Hauser L."/>
            <person name="Kyrpides N."/>
            <person name="Mikhailova N."/>
            <person name="Richardson P."/>
        </authorList>
    </citation>
    <scope>NUCLEOTIDE SEQUENCE [LARGE SCALE GENOMIC DNA]</scope>
    <source>
        <strain>NCIMB 400</strain>
    </source>
</reference>
<keyword id="KW-0131">Cell cycle</keyword>
<keyword id="KW-0132">Cell division</keyword>
<keyword id="KW-0574">Periplasm</keyword>
<keyword id="KW-1185">Reference proteome</keyword>
<keyword id="KW-0732">Signal</keyword>
<organism>
    <name type="scientific">Shewanella frigidimarina (strain NCIMB 400)</name>
    <dbReference type="NCBI Taxonomy" id="318167"/>
    <lineage>
        <taxon>Bacteria</taxon>
        <taxon>Pseudomonadati</taxon>
        <taxon>Pseudomonadota</taxon>
        <taxon>Gammaproteobacteria</taxon>
        <taxon>Alteromonadales</taxon>
        <taxon>Shewanellaceae</taxon>
        <taxon>Shewanella</taxon>
    </lineage>
</organism>
<name>TOLB_SHEFN</name>
<evidence type="ECO:0000255" key="1">
    <source>
        <dbReference type="HAMAP-Rule" id="MF_00671"/>
    </source>
</evidence>
<comment type="function">
    <text evidence="1">Part of the Tol-Pal system, which plays a role in outer membrane invagination during cell division and is important for maintaining outer membrane integrity.</text>
</comment>
<comment type="subunit">
    <text evidence="1">The Tol-Pal system is composed of five core proteins: the inner membrane proteins TolA, TolQ and TolR, the periplasmic protein TolB and the outer membrane protein Pal. They form a network linking the inner and outer membranes and the peptidoglycan layer.</text>
</comment>
<comment type="subcellular location">
    <subcellularLocation>
        <location evidence="1">Periplasm</location>
    </subcellularLocation>
</comment>
<comment type="similarity">
    <text evidence="1">Belongs to the TolB family.</text>
</comment>
<protein>
    <recommendedName>
        <fullName evidence="1">Tol-Pal system protein TolB</fullName>
    </recommendedName>
</protein>
<sequence>MNNLAKWLTLVLIVLTTPARAALDIVITEGVDAARPIAVVPFVWQGQGPAPASISDVVASDLSRSGTFKTLDVRALPQSTISSVNGFTAQNWANVEAEALVVGTVKPYGADQYLVSFELIDLVKAQLQAGKGPQNNNELLLESRETVISANQFRQYSHRISDIVYEKLTGIRGAFLTRIAYVVVKQGQKAPYHLMIADYDGYNEQMLLRSPEPLMSPTWSPDGRRLAYVSFENRKAEIFVQDIYSQTRTLVSSFDGINGAPAFSPDGKKLAVTLSKDGQPEIYVVDIATKATRRITEHYAIDTEPSWFPDGKSILFTSERGGKPQLYRVSLDTNKVSRMTFEGEWNLGGSISPDGRSMIFVNRTNGKFHIARMDLATRFMQVLSSTQLDESPSVAPNGTMVIYGTTHQGKQVLAAVSMDGRFKARLPVGQGEVKSPAWSPFL</sequence>